<dbReference type="EMBL" id="CR859788">
    <property type="protein sequence ID" value="CAH91946.1"/>
    <property type="molecule type" value="mRNA"/>
</dbReference>
<dbReference type="EMBL" id="ABGA01340709">
    <property type="status" value="NOT_ANNOTATED_CDS"/>
    <property type="molecule type" value="Genomic_DNA"/>
</dbReference>
<dbReference type="EMBL" id="ABGA01340710">
    <property type="status" value="NOT_ANNOTATED_CDS"/>
    <property type="molecule type" value="Genomic_DNA"/>
</dbReference>
<dbReference type="RefSeq" id="NP_001126129.1">
    <property type="nucleotide sequence ID" value="NM_001132657.1"/>
</dbReference>
<dbReference type="RefSeq" id="XP_024088819.1">
    <property type="nucleotide sequence ID" value="XM_024233051.3"/>
</dbReference>
<dbReference type="RefSeq" id="XP_024088820.1">
    <property type="nucleotide sequence ID" value="XM_024233052.3"/>
</dbReference>
<dbReference type="RefSeq" id="XP_063573153.1">
    <property type="nucleotide sequence ID" value="XM_063717083.1"/>
</dbReference>
<dbReference type="RefSeq" id="XP_063573154.1">
    <property type="nucleotide sequence ID" value="XM_063717084.1"/>
</dbReference>
<dbReference type="BMRB" id="Q5R8G4"/>
<dbReference type="SMR" id="Q5R8G4"/>
<dbReference type="FunCoup" id="Q5R8G4">
    <property type="interactions" value="3466"/>
</dbReference>
<dbReference type="STRING" id="9601.ENSPPYP00000008439"/>
<dbReference type="Ensembl" id="ENSPPYT00000008783.2">
    <property type="protein sequence ID" value="ENSPPYP00000008439.1"/>
    <property type="gene ID" value="ENSPPYG00000007472.2"/>
</dbReference>
<dbReference type="GeneID" id="100173086"/>
<dbReference type="KEGG" id="pon:100173086"/>
<dbReference type="CTD" id="10204"/>
<dbReference type="eggNOG" id="KOG2104">
    <property type="taxonomic scope" value="Eukaryota"/>
</dbReference>
<dbReference type="GeneTree" id="ENSGT00510000047030"/>
<dbReference type="InParanoid" id="Q5R8G4"/>
<dbReference type="OMA" id="QFVEYYY"/>
<dbReference type="OrthoDB" id="6507044at2759"/>
<dbReference type="TreeFam" id="TF314422"/>
<dbReference type="Proteomes" id="UP000001595">
    <property type="component" value="Chromosome 16"/>
</dbReference>
<dbReference type="GO" id="GO:0005829">
    <property type="term" value="C:cytosol"/>
    <property type="evidence" value="ECO:0000250"/>
    <property type="project" value="UniProtKB"/>
</dbReference>
<dbReference type="GO" id="GO:0005637">
    <property type="term" value="C:nuclear inner membrane"/>
    <property type="evidence" value="ECO:0007669"/>
    <property type="project" value="UniProtKB-SubCell"/>
</dbReference>
<dbReference type="GO" id="GO:0031965">
    <property type="term" value="C:nuclear membrane"/>
    <property type="evidence" value="ECO:0000250"/>
    <property type="project" value="UniProtKB"/>
</dbReference>
<dbReference type="GO" id="GO:0005640">
    <property type="term" value="C:nuclear outer membrane"/>
    <property type="evidence" value="ECO:0007669"/>
    <property type="project" value="UniProtKB-SubCell"/>
</dbReference>
<dbReference type="GO" id="GO:0005643">
    <property type="term" value="C:nuclear pore"/>
    <property type="evidence" value="ECO:0007669"/>
    <property type="project" value="UniProtKB-SubCell"/>
</dbReference>
<dbReference type="GO" id="GO:0005654">
    <property type="term" value="C:nucleoplasm"/>
    <property type="evidence" value="ECO:0000250"/>
    <property type="project" value="UniProtKB"/>
</dbReference>
<dbReference type="GO" id="GO:0042802">
    <property type="term" value="F:identical protein binding"/>
    <property type="evidence" value="ECO:0007669"/>
    <property type="project" value="Ensembl"/>
</dbReference>
<dbReference type="GO" id="GO:0031267">
    <property type="term" value="F:small GTPase binding"/>
    <property type="evidence" value="ECO:0000250"/>
    <property type="project" value="UniProtKB"/>
</dbReference>
<dbReference type="GO" id="GO:0017056">
    <property type="term" value="F:structural constituent of nuclear pore"/>
    <property type="evidence" value="ECO:0000250"/>
    <property type="project" value="UniProtKB"/>
</dbReference>
<dbReference type="GO" id="GO:0051028">
    <property type="term" value="P:mRNA transport"/>
    <property type="evidence" value="ECO:0007669"/>
    <property type="project" value="UniProtKB-KW"/>
</dbReference>
<dbReference type="GO" id="GO:0006611">
    <property type="term" value="P:protein export from nucleus"/>
    <property type="evidence" value="ECO:0007669"/>
    <property type="project" value="Ensembl"/>
</dbReference>
<dbReference type="GO" id="GO:0006606">
    <property type="term" value="P:protein import into nucleus"/>
    <property type="evidence" value="ECO:0000250"/>
    <property type="project" value="UniProtKB"/>
</dbReference>
<dbReference type="GO" id="GO:0090204">
    <property type="term" value="P:protein localization to nuclear pore"/>
    <property type="evidence" value="ECO:0000250"/>
    <property type="project" value="UniProtKB"/>
</dbReference>
<dbReference type="CDD" id="cd00780">
    <property type="entry name" value="NTF2"/>
    <property type="match status" value="1"/>
</dbReference>
<dbReference type="FunFam" id="3.10.450.50:FF:000007">
    <property type="entry name" value="Nuclear transport factor 2"/>
    <property type="match status" value="1"/>
</dbReference>
<dbReference type="Gene3D" id="3.10.450.50">
    <property type="match status" value="1"/>
</dbReference>
<dbReference type="InterPro" id="IPR045875">
    <property type="entry name" value="NTF2"/>
</dbReference>
<dbReference type="InterPro" id="IPR032710">
    <property type="entry name" value="NTF2-like_dom_sf"/>
</dbReference>
<dbReference type="InterPro" id="IPR002075">
    <property type="entry name" value="NTF2_dom"/>
</dbReference>
<dbReference type="InterPro" id="IPR018222">
    <property type="entry name" value="Nuclear_transport_factor_2_euk"/>
</dbReference>
<dbReference type="PANTHER" id="PTHR12612">
    <property type="entry name" value="NUCLEAR TRANSPORT FACTOR 2"/>
    <property type="match status" value="1"/>
</dbReference>
<dbReference type="Pfam" id="PF02136">
    <property type="entry name" value="NTF2"/>
    <property type="match status" value="1"/>
</dbReference>
<dbReference type="SUPFAM" id="SSF54427">
    <property type="entry name" value="NTF2-like"/>
    <property type="match status" value="1"/>
</dbReference>
<dbReference type="PROSITE" id="PS50177">
    <property type="entry name" value="NTF2_DOMAIN"/>
    <property type="match status" value="1"/>
</dbReference>
<gene>
    <name evidence="1" type="primary">NUTF2</name>
</gene>
<name>NTF2_PONAB</name>
<comment type="function">
    <text evidence="1">Mediates the import of GDP-bound RAN from the cytoplasm into the nucleus which is essential for the function of RAN in cargo receptor-mediated nucleocytoplasmic transport. Thereby, plays indirectly a more general role in cargo receptor-mediated nucleocytoplasmic transport. Interacts with GDP-bound RAN in the cytosol, recruits it to the nuclear pore complex via its interaction with nucleoporins and promotes its nuclear import.</text>
</comment>
<comment type="subunit">
    <text evidence="1">Homodimer. Interacts with RAN (GDP-bound form); the interaction is direct and regulates RAN nuclear import. Interacts with the nucleoporins NUP54, NUP58 and NUP62 (via FG repeats); recruits NUTF2 to the nuclear pore complex a step required for NUTF2-mediated GDP-bound RAN nuclear import. Interacts with CAPG; mediates its nuclear import.</text>
</comment>
<comment type="subcellular location">
    <subcellularLocation>
        <location evidence="1">Cytoplasm</location>
        <location evidence="1">Cytosol</location>
    </subcellularLocation>
    <subcellularLocation>
        <location evidence="2">Nucleus outer membrane</location>
    </subcellularLocation>
    <subcellularLocation>
        <location evidence="2">Nucleus</location>
        <location evidence="2">Nuclear pore complex</location>
    </subcellularLocation>
    <subcellularLocation>
        <location evidence="2">Nucleus inner membrane</location>
    </subcellularLocation>
    <subcellularLocation>
        <location evidence="1">Nucleus</location>
        <location evidence="1">Nucleoplasm</location>
    </subcellularLocation>
    <text evidence="1">At steady state it is essentially nucleoplasmic, enriched in nucleoplasmic foci.</text>
</comment>
<evidence type="ECO:0000250" key="1">
    <source>
        <dbReference type="UniProtKB" id="P61970"/>
    </source>
</evidence>
<evidence type="ECO:0000250" key="2">
    <source>
        <dbReference type="UniProtKB" id="P61972"/>
    </source>
</evidence>
<evidence type="ECO:0000255" key="3">
    <source>
        <dbReference type="PROSITE-ProRule" id="PRU00137"/>
    </source>
</evidence>
<evidence type="ECO:0000305" key="4"/>
<organism>
    <name type="scientific">Pongo abelii</name>
    <name type="common">Sumatran orangutan</name>
    <name type="synonym">Pongo pygmaeus abelii</name>
    <dbReference type="NCBI Taxonomy" id="9601"/>
    <lineage>
        <taxon>Eukaryota</taxon>
        <taxon>Metazoa</taxon>
        <taxon>Chordata</taxon>
        <taxon>Craniata</taxon>
        <taxon>Vertebrata</taxon>
        <taxon>Euteleostomi</taxon>
        <taxon>Mammalia</taxon>
        <taxon>Eutheria</taxon>
        <taxon>Euarchontoglires</taxon>
        <taxon>Primates</taxon>
        <taxon>Haplorrhini</taxon>
        <taxon>Catarrhini</taxon>
        <taxon>Hominidae</taxon>
        <taxon>Pongo</taxon>
    </lineage>
</organism>
<reference key="1">
    <citation type="submission" date="2004-11" db="EMBL/GenBank/DDBJ databases">
        <authorList>
            <consortium name="The German cDNA consortium"/>
        </authorList>
    </citation>
    <scope>NUCLEOTIDE SEQUENCE [LARGE SCALE MRNA]</scope>
    <source>
        <tissue>Heart</tissue>
    </source>
</reference>
<reference key="2">
    <citation type="submission" date="2008-02" db="EMBL/GenBank/DDBJ databases">
        <title>A 6x draft sequence assembly of the Pongo pygmaeus abelii genome.</title>
        <authorList>
            <person name="Wilson R.K."/>
            <person name="Mardis E."/>
        </authorList>
    </citation>
    <scope>NUCLEOTIDE SEQUENCE [LARGE SCALE GENOMIC DNA]</scope>
</reference>
<accession>Q5R8G4</accession>
<accession>H2NR93</accession>
<proteinExistence type="evidence at transcript level"/>
<sequence length="127" mass="14478">MGDKPIWEQIGSSFIQHYYQLFDNDRTQLGAIYIDASCLTWEGQQFQGKAAIVEKLSSLPFQKIQHSITAQDHQPTPDSCIISMVVGQLKADEDPIMGFHQMFLLKNINDAWVCTNDMFRLALHNFG</sequence>
<keyword id="KW-0007">Acetylation</keyword>
<keyword id="KW-0963">Cytoplasm</keyword>
<keyword id="KW-0472">Membrane</keyword>
<keyword id="KW-0509">mRNA transport</keyword>
<keyword id="KW-0906">Nuclear pore complex</keyword>
<keyword id="KW-0539">Nucleus</keyword>
<keyword id="KW-0653">Protein transport</keyword>
<keyword id="KW-1185">Reference proteome</keyword>
<keyword id="KW-0811">Translocation</keyword>
<keyword id="KW-0813">Transport</keyword>
<protein>
    <recommendedName>
        <fullName evidence="4">Nuclear transport factor 2</fullName>
        <shortName>NTF-2</shortName>
    </recommendedName>
</protein>
<feature type="chain" id="PRO_0000250701" description="Nuclear transport factor 2">
    <location>
        <begin position="1"/>
        <end position="127"/>
    </location>
</feature>
<feature type="domain" description="NTF2" evidence="3">
    <location>
        <begin position="10"/>
        <end position="121"/>
    </location>
</feature>
<feature type="modified residue" description="N6-acetyllysine" evidence="1">
    <location>
        <position position="4"/>
    </location>
</feature>
<feature type="sequence conflict" description="In Ref. 1; CAH91946." evidence="4" ref="1">
    <original>N</original>
    <variation>D</variation>
    <location>
        <position position="125"/>
    </location>
</feature>